<evidence type="ECO:0000250" key="1">
    <source>
        <dbReference type="UniProtKB" id="P56726"/>
    </source>
</evidence>
<evidence type="ECO:0000255" key="2"/>
<evidence type="ECO:0000255" key="3">
    <source>
        <dbReference type="PROSITE-ProRule" id="PRU00090"/>
    </source>
</evidence>
<evidence type="ECO:0000256" key="4">
    <source>
        <dbReference type="SAM" id="MobiDB-lite"/>
    </source>
</evidence>
<evidence type="ECO:0000269" key="5">
    <source>
    </source>
</evidence>
<evidence type="ECO:0000269" key="6">
    <source>
    </source>
</evidence>
<evidence type="ECO:0000269" key="7">
    <source>
    </source>
</evidence>
<evidence type="ECO:0000269" key="8">
    <source>
    </source>
</evidence>
<evidence type="ECO:0000269" key="9">
    <source>
    </source>
</evidence>
<evidence type="ECO:0000269" key="10">
    <source>
    </source>
</evidence>
<evidence type="ECO:0000269" key="11">
    <source>
    </source>
</evidence>
<evidence type="ECO:0000269" key="12">
    <source>
    </source>
</evidence>
<evidence type="ECO:0000305" key="13"/>
<evidence type="ECO:0007744" key="14">
    <source>
        <dbReference type="PDB" id="4JKV"/>
    </source>
</evidence>
<evidence type="ECO:0007744" key="15">
    <source>
        <dbReference type="PDB" id="7ZI0"/>
    </source>
</evidence>
<evidence type="ECO:0007829" key="16">
    <source>
        <dbReference type="PDB" id="4JKV"/>
    </source>
</evidence>
<evidence type="ECO:0007829" key="17">
    <source>
        <dbReference type="PDB" id="4QIM"/>
    </source>
</evidence>
<evidence type="ECO:0007829" key="18">
    <source>
        <dbReference type="PDB" id="5V56"/>
    </source>
</evidence>
<evidence type="ECO:0007829" key="19">
    <source>
        <dbReference type="PDB" id="5V57"/>
    </source>
</evidence>
<evidence type="ECO:0007829" key="20">
    <source>
        <dbReference type="PDB" id="6XBK"/>
    </source>
</evidence>
<evidence type="ECO:0007829" key="21">
    <source>
        <dbReference type="PDB" id="7ZI0"/>
    </source>
</evidence>
<name>SMO_HUMAN</name>
<proteinExistence type="evidence at protein level"/>
<gene>
    <name type="primary">SMO</name>
    <name type="synonym">SMOH</name>
</gene>
<sequence length="787" mass="86397">MAAARPARGPELPLLGLLLLLLLGDPGRGAASSGNATGPGPRSAGGSARRSAAVTGPPPPLSHCGRAAPCEPLRYNVCLGSVLPYGATSTLLAGDSDSQEEAHGKLVLWSGLRNAPRCWAVIQPLLCAVYMPKCENDRVELPSRTLCQATRGPCAIVERERGWPDFLRCTPDRFPEGCTNEVQNIKFNSSGQCEVPLVRTDNPKSWYEDVEGCGIQCQNPLFTEAEHQDMHSYIAAFGAVTGLCTLFTLATFVADWRNSNRYPAVILFYVNACFFVGSIGWLAQFMDGARREIVCRADGTMRLGEPTSNETLSCVIIFVIVYYALMAGVVWFVVLTYAWHTSFKALGTTYQPLSGKTSYFHLLTWSLPFVLTVAILAVAQVDGDSVSGICFVGYKNYRYRAGFVLAPIGLVLIVGGYFLIRGVMTLFSIKSNHPGLLSEKAASKINETMLRLGIFGFLAFGFVLITFSCHFYDFFNQAEWERSFRDYVLCQANVTIGLPTKQPIPDCEIKNRPSLLVEKINLFAMFGTGIAMSTWVWTKATLLIWRRTWCRLTGQSDDEPKRIKKSKMIAKAFSKRHELLQNPGQELSFSMHTVSHDGPVAGLAFDLNEPSADVSSAWAQHVTKMVARRGAILPQDISVTPVATPVPPEEQANLWLVEAEISPELQKRLGRKKKRRKRKKEVCPLAPPPELHPPAPAPSTIPRLPQLPRQKCLVAAGAWGAGDSCRQGAWTLVSNPFCPEPSPPQDPFLPSAPAPVAWAHGRRQGLGPIHSRTNLMDTELMDADSDF</sequence>
<reference key="1">
    <citation type="journal article" date="1996" name="Nature">
        <title>The tumour-suppressor gene patched encodes a candidate receptor for Sonic hedgehog.</title>
        <authorList>
            <person name="Stone D.M."/>
            <person name="Hynes M."/>
            <person name="Armanini M."/>
            <person name="Swanson T.A."/>
            <person name="Gu Q."/>
            <person name="Johnson R.L."/>
            <person name="Scott M.P."/>
            <person name="Pennica D."/>
            <person name="Goddard A."/>
            <person name="Phillips H."/>
            <person name="Noll M."/>
            <person name="Hooper J.E."/>
            <person name="de Sauvage F."/>
            <person name="Rosenthal A."/>
        </authorList>
    </citation>
    <scope>NUCLEOTIDE SEQUENCE [MRNA]</scope>
    <source>
        <tissue>Embryonic lung</tissue>
    </source>
</reference>
<reference key="2">
    <citation type="journal article" date="1998" name="Nature">
        <title>Activating Smoothened mutations in sporadic basal-cell carcinoma.</title>
        <authorList>
            <person name="Xie J."/>
            <person name="Murone M."/>
            <person name="Luoh S.-M."/>
            <person name="Ryan A."/>
            <person name="Gu Q."/>
            <person name="Zhang C."/>
            <person name="Bonifas J.M."/>
            <person name="Lam C.-W."/>
            <person name="Hynes M."/>
            <person name="Goddard A."/>
            <person name="Rosenthal A."/>
            <person name="Epstein E.H. Jr."/>
            <person name="de Sauvage F.J."/>
        </authorList>
    </citation>
    <scope>NUCLEOTIDE SEQUENCE [GENOMIC DNA]</scope>
    <scope>VARIANTS LEU-535 AND GLN-562</scope>
</reference>
<reference key="3">
    <citation type="submission" date="1999-01" db="EMBL/GenBank/DDBJ databases">
        <title>Cloning and identification of Gx gene in NPC.</title>
        <authorList>
            <person name="Jiang N."/>
            <person name="Zeng Z.Y."/>
            <person name="Li G.Y."/>
        </authorList>
    </citation>
    <scope>NUCLEOTIDE SEQUENCE [MRNA]</scope>
</reference>
<reference key="4">
    <citation type="journal article" date="2003" name="Science">
        <title>Human chromosome 7: DNA sequence and biology.</title>
        <authorList>
            <person name="Scherer S.W."/>
            <person name="Cheung J."/>
            <person name="MacDonald J.R."/>
            <person name="Osborne L.R."/>
            <person name="Nakabayashi K."/>
            <person name="Herbrick J.-A."/>
            <person name="Carson A.R."/>
            <person name="Parker-Katiraee L."/>
            <person name="Skaug J."/>
            <person name="Khaja R."/>
            <person name="Zhang J."/>
            <person name="Hudek A.K."/>
            <person name="Li M."/>
            <person name="Haddad M."/>
            <person name="Duggan G.E."/>
            <person name="Fernandez B.A."/>
            <person name="Kanematsu E."/>
            <person name="Gentles S."/>
            <person name="Christopoulos C.C."/>
            <person name="Choufani S."/>
            <person name="Kwasnicka D."/>
            <person name="Zheng X.H."/>
            <person name="Lai Z."/>
            <person name="Nusskern D.R."/>
            <person name="Zhang Q."/>
            <person name="Gu Z."/>
            <person name="Lu F."/>
            <person name="Zeesman S."/>
            <person name="Nowaczyk M.J."/>
            <person name="Teshima I."/>
            <person name="Chitayat D."/>
            <person name="Shuman C."/>
            <person name="Weksberg R."/>
            <person name="Zackai E.H."/>
            <person name="Grebe T.A."/>
            <person name="Cox S.R."/>
            <person name="Kirkpatrick S.J."/>
            <person name="Rahman N."/>
            <person name="Friedman J.M."/>
            <person name="Heng H.H.Q."/>
            <person name="Pelicci P.G."/>
            <person name="Lo-Coco F."/>
            <person name="Belloni E."/>
            <person name="Shaffer L.G."/>
            <person name="Pober B."/>
            <person name="Morton C.C."/>
            <person name="Gusella J.F."/>
            <person name="Bruns G.A.P."/>
            <person name="Korf B.R."/>
            <person name="Quade B.J."/>
            <person name="Ligon A.H."/>
            <person name="Ferguson H."/>
            <person name="Higgins A.W."/>
            <person name="Leach N.T."/>
            <person name="Herrick S.R."/>
            <person name="Lemyre E."/>
            <person name="Farra C.G."/>
            <person name="Kim H.-G."/>
            <person name="Summers A.M."/>
            <person name="Gripp K.W."/>
            <person name="Roberts W."/>
            <person name="Szatmari P."/>
            <person name="Winsor E.J.T."/>
            <person name="Grzeschik K.-H."/>
            <person name="Teebi A."/>
            <person name="Minassian B.A."/>
            <person name="Kere J."/>
            <person name="Armengol L."/>
            <person name="Pujana M.A."/>
            <person name="Estivill X."/>
            <person name="Wilson M.D."/>
            <person name="Koop B.F."/>
            <person name="Tosi S."/>
            <person name="Moore G.E."/>
            <person name="Boright A.P."/>
            <person name="Zlotorynski E."/>
            <person name="Kerem B."/>
            <person name="Kroisel P.M."/>
            <person name="Petek E."/>
            <person name="Oscier D.G."/>
            <person name="Mould S.J."/>
            <person name="Doehner H."/>
            <person name="Doehner K."/>
            <person name="Rommens J.M."/>
            <person name="Vincent J.B."/>
            <person name="Venter J.C."/>
            <person name="Li P.W."/>
            <person name="Mural R.J."/>
            <person name="Adams M.D."/>
            <person name="Tsui L.-C."/>
        </authorList>
    </citation>
    <scope>NUCLEOTIDE SEQUENCE [LARGE SCALE GENOMIC DNA]</scope>
</reference>
<reference key="5">
    <citation type="submission" date="2005-07" db="EMBL/GenBank/DDBJ databases">
        <authorList>
            <person name="Mural R.J."/>
            <person name="Istrail S."/>
            <person name="Sutton G."/>
            <person name="Florea L."/>
            <person name="Halpern A.L."/>
            <person name="Mobarry C.M."/>
            <person name="Lippert R."/>
            <person name="Walenz B."/>
            <person name="Shatkay H."/>
            <person name="Dew I."/>
            <person name="Miller J.R."/>
            <person name="Flanigan M.J."/>
            <person name="Edwards N.J."/>
            <person name="Bolanos R."/>
            <person name="Fasulo D."/>
            <person name="Halldorsson B.V."/>
            <person name="Hannenhalli S."/>
            <person name="Turner R."/>
            <person name="Yooseph S."/>
            <person name="Lu F."/>
            <person name="Nusskern D.R."/>
            <person name="Shue B.C."/>
            <person name="Zheng X.H."/>
            <person name="Zhong F."/>
            <person name="Delcher A.L."/>
            <person name="Huson D.H."/>
            <person name="Kravitz S.A."/>
            <person name="Mouchard L."/>
            <person name="Reinert K."/>
            <person name="Remington K.A."/>
            <person name="Clark A.G."/>
            <person name="Waterman M.S."/>
            <person name="Eichler E.E."/>
            <person name="Adams M.D."/>
            <person name="Hunkapiller M.W."/>
            <person name="Myers E.W."/>
            <person name="Venter J.C."/>
        </authorList>
    </citation>
    <scope>NUCLEOTIDE SEQUENCE [LARGE SCALE GENOMIC DNA]</scope>
</reference>
<reference key="6">
    <citation type="journal article" date="2004" name="Genome Res.">
        <title>The status, quality, and expansion of the NIH full-length cDNA project: the Mammalian Gene Collection (MGC).</title>
        <authorList>
            <consortium name="The MGC Project Team"/>
        </authorList>
    </citation>
    <scope>NUCLEOTIDE SEQUENCE [LARGE SCALE MRNA]</scope>
    <source>
        <tissue>Brain</tissue>
    </source>
</reference>
<reference key="7">
    <citation type="journal article" date="2009" name="Curr. Biol.">
        <title>The mammalian Cos2 homolog Kif7 plays an essential role in modulating Hh signal transduction during development.</title>
        <authorList>
            <person name="Endoh-Yamagami S."/>
            <person name="Evangelista M."/>
            <person name="Wilson D."/>
            <person name="Wen X."/>
            <person name="Theunissen J.W."/>
            <person name="Phamluong K."/>
            <person name="Davis M."/>
            <person name="Scales S.J."/>
            <person name="Solloway M.J."/>
            <person name="de Sauvage F.J."/>
            <person name="Peterson A.S."/>
        </authorList>
    </citation>
    <scope>FUNCTION</scope>
    <scope>INTERACTION WITH KIF7</scope>
</reference>
<reference key="8">
    <citation type="journal article" date="2011" name="J. Biol. Chem.">
        <title>Growth arrest specific 8 (Gas8) and G protein-coupled receptor kinase 2 (GRK2) cooperate in the control of Smoothened signaling.</title>
        <authorList>
            <person name="Evron T."/>
            <person name="Philipp M."/>
            <person name="Lu J."/>
            <person name="Meloni A.R."/>
            <person name="Burkhalter M."/>
            <person name="Chen W."/>
            <person name="Caron M.G."/>
        </authorList>
    </citation>
    <scope>INTERACTION WITH GAS8</scope>
</reference>
<reference key="9">
    <citation type="journal article" date="2011" name="PLoS Genet.">
        <title>A novel protein LZTFL1 regulates ciliary trafficking of the BBSome and Smoothened.</title>
        <authorList>
            <person name="Seo S."/>
            <person name="Zhang Q."/>
            <person name="Bugge K."/>
            <person name="Breslow D.K."/>
            <person name="Searby C.C."/>
            <person name="Nachury M.V."/>
            <person name="Sheffield V.C."/>
        </authorList>
    </citation>
    <scope>ASSOCIATION WITH THE BBSOME COMPLEX</scope>
    <scope>INTERACTION WITH BBS5 AND BBS7</scope>
    <scope>SUBCELLULAR LOCATION</scope>
</reference>
<reference key="10">
    <citation type="journal article" date="2016" name="Am. J. Hum. Genet.">
        <title>A recurrent mosaic mutation in SMO, encoding the hedgehog signal transducer smoothened, is the major cause of Curry-Jones syndrome.</title>
        <authorList>
            <person name="Twigg S.R."/>
            <person name="Hufnagel R.B."/>
            <person name="Miller K.A."/>
            <person name="Zhou Y."/>
            <person name="McGowan S.J."/>
            <person name="Taylor J."/>
            <person name="Craft J."/>
            <person name="Taylor J.C."/>
            <person name="Santoro S.L."/>
            <person name="Huang T."/>
            <person name="Hopkin R.J."/>
            <person name="Brady A.F."/>
            <person name="Clayton-Smith J."/>
            <person name="Clericuzio C.L."/>
            <person name="Grange D.K."/>
            <person name="Groesser L."/>
            <person name="Hafner C."/>
            <person name="Horn D."/>
            <person name="Temple I.K."/>
            <person name="Dobyns W.B."/>
            <person name="Curry C.J."/>
            <person name="Jones M.C."/>
            <person name="Wilkie A.O."/>
        </authorList>
    </citation>
    <scope>INVOLVEMENT IN CRJS</scope>
    <scope>VARIANT CRJS PHE-412</scope>
</reference>
<reference evidence="14" key="11">
    <citation type="journal article" date="2013" name="Nature">
        <title>Structure of the human smoothened receptor bound to an antitumour agent.</title>
        <authorList>
            <person name="Wang C."/>
            <person name="Wu H."/>
            <person name="Katritch V."/>
            <person name="Han G.W."/>
            <person name="Huang X.P."/>
            <person name="Liu W."/>
            <person name="Siu F.Y."/>
            <person name="Roth B.L."/>
            <person name="Cherezov V."/>
            <person name="Stevens R.C."/>
        </authorList>
    </citation>
    <scope>X-RAY CRYSTALLOGRAPHY (2.45 ANGSTROMS) OF 190-555 IN COMPLEX WITH ANTAGONIST</scope>
    <scope>SUBUNIT</scope>
    <scope>DISULFIDE BONDS</scope>
</reference>
<reference evidence="15" key="12">
    <citation type="journal article" date="2022" name="Sci. Adv.">
        <title>Patched 1 regulates Smoothened by controlling sterol binding to its extracellular cysteine-rich domain.</title>
        <authorList>
            <person name="Kinnebrew M."/>
            <person name="Woolley R.E."/>
            <person name="Ansell T.B."/>
            <person name="Byrne E.F.X."/>
            <person name="Frigui S."/>
            <person name="Luchetti G."/>
            <person name="Sircar R."/>
            <person name="Nachtergaele S."/>
            <person name="Mydock-McGrane L."/>
            <person name="Krishnan K."/>
            <person name="Newstead S."/>
            <person name="Sansom M.S.P."/>
            <person name="Covey D.F."/>
            <person name="Siebold C."/>
            <person name="Rohatgi R."/>
        </authorList>
    </citation>
    <scope>X-RAY CRYSTALLOGRAPHY (3.00 ANGSTROMS) OF 32-555 OF MUTANT PHE-329 IN COMPLEX WITH CHOLESTEROL</scope>
    <scope>DOMAIN</scope>
    <scope>DISULFIDE BONDS</scope>
</reference>
<reference key="13">
    <citation type="journal article" date="2014" name="Nat. Genet.">
        <title>Identification of recurrent SMO and BRAF mutations in ameloblastomas.</title>
        <authorList>
            <person name="Sweeney R.T."/>
            <person name="McClary A.C."/>
            <person name="Myers B.R."/>
            <person name="Biscocho J."/>
            <person name="Neahring L."/>
            <person name="Kwei K.A."/>
            <person name="Qu K."/>
            <person name="Gong X."/>
            <person name="Ng T."/>
            <person name="Jones C.D."/>
            <person name="Varma S."/>
            <person name="Odegaard J.I."/>
            <person name="Sugiyama T."/>
            <person name="Koyota S."/>
            <person name="Rubin B.P."/>
            <person name="Troxell M.L."/>
            <person name="Pelham R.J."/>
            <person name="Zehnder J.L."/>
            <person name="Beachy P.A."/>
            <person name="Pollack J.R."/>
            <person name="West R.B."/>
        </authorList>
    </citation>
    <scope>VARIANT CRJS PHE-412</scope>
    <scope>VARIANT LEU-535</scope>
    <scope>CHARACTERIZATION OF VARIANT CRJS PHE-412</scope>
    <scope>CHARACTERIZATION OF VARIANT LEU-535</scope>
</reference>
<protein>
    <recommendedName>
        <fullName>Protein smoothened</fullName>
    </recommendedName>
    <alternativeName>
        <fullName>Protein Gx</fullName>
    </alternativeName>
</protein>
<feature type="signal peptide" evidence="2">
    <location>
        <begin position="1"/>
        <end position="27"/>
    </location>
</feature>
<feature type="chain" id="PRO_0000013015" description="Protein smoothened">
    <location>
        <begin position="28"/>
        <end position="787"/>
    </location>
</feature>
<feature type="topological domain" description="Extracellular" evidence="2">
    <location>
        <begin position="28"/>
        <end position="233"/>
    </location>
</feature>
<feature type="transmembrane region" description="Helical; Name=1" evidence="2">
    <location>
        <begin position="234"/>
        <end position="254"/>
    </location>
</feature>
<feature type="topological domain" description="Cytoplasmic" evidence="2">
    <location>
        <begin position="255"/>
        <end position="262"/>
    </location>
</feature>
<feature type="transmembrane region" description="Helical; Name=2" evidence="2">
    <location>
        <begin position="263"/>
        <end position="283"/>
    </location>
</feature>
<feature type="topological domain" description="Extracellular" evidence="2">
    <location>
        <begin position="284"/>
        <end position="314"/>
    </location>
</feature>
<feature type="transmembrane region" description="Helical; Name=3" evidence="2">
    <location>
        <begin position="315"/>
        <end position="335"/>
    </location>
</feature>
<feature type="topological domain" description="Cytoplasmic" evidence="2">
    <location>
        <begin position="336"/>
        <end position="358"/>
    </location>
</feature>
<feature type="transmembrane region" description="Helical; Name=4" evidence="2">
    <location>
        <begin position="359"/>
        <end position="379"/>
    </location>
</feature>
<feature type="topological domain" description="Extracellular" evidence="2">
    <location>
        <begin position="380"/>
        <end position="402"/>
    </location>
</feature>
<feature type="transmembrane region" description="Helical; Name=5" evidence="2">
    <location>
        <begin position="403"/>
        <end position="423"/>
    </location>
</feature>
<feature type="topological domain" description="Cytoplasmic" evidence="2">
    <location>
        <begin position="424"/>
        <end position="451"/>
    </location>
</feature>
<feature type="transmembrane region" description="Helical; Name=6" evidence="2">
    <location>
        <begin position="452"/>
        <end position="472"/>
    </location>
</feature>
<feature type="topological domain" description="Extracellular" evidence="2">
    <location>
        <begin position="473"/>
        <end position="524"/>
    </location>
</feature>
<feature type="transmembrane region" description="Helical; Name=7" evidence="2">
    <location>
        <begin position="525"/>
        <end position="545"/>
    </location>
</feature>
<feature type="topological domain" description="Cytoplasmic" evidence="2">
    <location>
        <begin position="546"/>
        <end position="787"/>
    </location>
</feature>
<feature type="domain" description="FZ" evidence="3">
    <location>
        <begin position="65"/>
        <end position="181"/>
    </location>
</feature>
<feature type="region of interest" description="Disordered" evidence="4">
    <location>
        <begin position="30"/>
        <end position="60"/>
    </location>
</feature>
<feature type="region of interest" description="Interaction with BBS5 and BBS7" evidence="7">
    <location>
        <begin position="538"/>
        <end position="569"/>
    </location>
</feature>
<feature type="region of interest" description="Required for interaction with PRKACA" evidence="1">
    <location>
        <begin position="570"/>
        <end position="653"/>
    </location>
</feature>
<feature type="region of interest" description="Interaction with DLG5" evidence="1">
    <location>
        <begin position="581"/>
        <end position="593"/>
    </location>
</feature>
<feature type="region of interest" description="Disordered" evidence="4">
    <location>
        <begin position="667"/>
        <end position="704"/>
    </location>
</feature>
<feature type="compositionally biased region" description="Low complexity" evidence="4">
    <location>
        <begin position="38"/>
        <end position="53"/>
    </location>
</feature>
<feature type="compositionally biased region" description="Basic residues" evidence="4">
    <location>
        <begin position="668"/>
        <end position="680"/>
    </location>
</feature>
<feature type="compositionally biased region" description="Pro residues" evidence="4">
    <location>
        <begin position="685"/>
        <end position="699"/>
    </location>
</feature>
<feature type="binding site" evidence="11 15">
    <location>
        <position position="95"/>
    </location>
    <ligand>
        <name>cholesterol</name>
        <dbReference type="ChEBI" id="CHEBI:16113"/>
    </ligand>
</feature>
<feature type="binding site" evidence="1">
    <location>
        <position position="394"/>
    </location>
    <ligand>
        <name>cholesterol</name>
        <dbReference type="ChEBI" id="CHEBI:16113"/>
    </ligand>
</feature>
<feature type="modified residue" description="Phosphoserine" evidence="1">
    <location>
        <position position="556"/>
    </location>
</feature>
<feature type="modified residue" description="Phosphoserine" evidence="1">
    <location>
        <position position="574"/>
    </location>
</feature>
<feature type="modified residue" description="Phosphoserine" evidence="1">
    <location>
        <position position="590"/>
    </location>
</feature>
<feature type="modified residue" description="Phosphothreonine" evidence="1">
    <location>
        <position position="593"/>
    </location>
</feature>
<feature type="modified residue" description="Phosphoserine" evidence="1">
    <location>
        <position position="595"/>
    </location>
</feature>
<feature type="modified residue" description="Phosphoserine" evidence="1">
    <location>
        <position position="638"/>
    </location>
</feature>
<feature type="modified residue" description="Phosphothreonine" evidence="1">
    <location>
        <position position="640"/>
    </location>
</feature>
<feature type="modified residue" description="Phosphothreonine" evidence="1">
    <location>
        <position position="644"/>
    </location>
</feature>
<feature type="modified residue" description="Phosphoserine" evidence="1">
    <location>
        <position position="662"/>
    </location>
</feature>
<feature type="glycosylation site" description="N-linked (GlcNAc...) asparagine" evidence="2">
    <location>
        <position position="35"/>
    </location>
</feature>
<feature type="glycosylation site" description="N-linked (GlcNAc...) asparagine" evidence="2">
    <location>
        <position position="188"/>
    </location>
</feature>
<feature type="glycosylation site" description="N-linked (GlcNAc...) asparagine" evidence="2">
    <location>
        <position position="309"/>
    </location>
</feature>
<feature type="disulfide bond" evidence="11 15">
    <location>
        <begin position="64"/>
        <end position="178"/>
    </location>
</feature>
<feature type="disulfide bond" evidence="3 11 15">
    <location>
        <begin position="70"/>
        <end position="134"/>
    </location>
</feature>
<feature type="disulfide bond" evidence="3 11 15">
    <location>
        <begin position="78"/>
        <end position="127"/>
    </location>
</feature>
<feature type="disulfide bond" evidence="3 11 15">
    <location>
        <begin position="118"/>
        <end position="154"/>
    </location>
</feature>
<feature type="disulfide bond" evidence="3 11 15">
    <location>
        <begin position="147"/>
        <end position="169"/>
    </location>
</feature>
<feature type="disulfide bond" evidence="8 11 14 15">
    <location>
        <begin position="193"/>
        <end position="213"/>
    </location>
</feature>
<feature type="disulfide bond" evidence="8 11 14 15">
    <location>
        <begin position="217"/>
        <end position="295"/>
    </location>
</feature>
<feature type="disulfide bond" evidence="8 11 14 15">
    <location>
        <begin position="314"/>
        <end position="390"/>
    </location>
</feature>
<feature type="disulfide bond" evidence="8 11 14 15">
    <location>
        <begin position="490"/>
        <end position="507"/>
    </location>
</feature>
<feature type="sequence variant" id="VAR_077087" description="In CRJS; constitutive activation of the smoothened signaling pathway; dbSNP:rs879255280." evidence="9 10">
    <original>L</original>
    <variation>F</variation>
    <location>
        <position position="412"/>
    </location>
</feature>
<feature type="sequence variant" id="VAR_037891" description="In dbSNP:rs17710891.">
    <original>D</original>
    <variation>H</variation>
    <location>
        <position position="473"/>
    </location>
</feature>
<feature type="sequence variant" id="VAR_007848" description="In basal cell carcinoma and ameloblastoma samples; somatic mutation; constitutive activation of the smoothened signaling pathway; dbSNP:rs121918347." evidence="9 12">
    <original>W</original>
    <variation>L</variation>
    <location>
        <position position="535"/>
    </location>
</feature>
<feature type="sequence variant" id="VAR_007849" description="In basal cell carcinoma samples; somatic mutation; dbSNP:rs121918348." evidence="12">
    <original>R</original>
    <variation>Q</variation>
    <location>
        <position position="562"/>
    </location>
</feature>
<feature type="helix" evidence="21">
    <location>
        <begin position="62"/>
        <end position="64"/>
    </location>
</feature>
<feature type="strand" evidence="18">
    <location>
        <begin position="65"/>
        <end position="67"/>
    </location>
</feature>
<feature type="strand" evidence="18">
    <location>
        <begin position="76"/>
        <end position="78"/>
    </location>
</feature>
<feature type="strand" evidence="18">
    <location>
        <begin position="86"/>
        <end position="88"/>
    </location>
</feature>
<feature type="strand" evidence="18">
    <location>
        <begin position="90"/>
        <end position="92"/>
    </location>
</feature>
<feature type="helix" evidence="18">
    <location>
        <begin position="99"/>
        <end position="109"/>
    </location>
</feature>
<feature type="helix" evidence="18">
    <location>
        <begin position="110"/>
        <end position="113"/>
    </location>
</feature>
<feature type="helix" evidence="18">
    <location>
        <begin position="116"/>
        <end position="130"/>
    </location>
</feature>
<feature type="strand" evidence="18">
    <location>
        <begin position="136"/>
        <end position="140"/>
    </location>
</feature>
<feature type="helix" evidence="18">
    <location>
        <begin position="144"/>
        <end position="151"/>
    </location>
</feature>
<feature type="turn" evidence="18">
    <location>
        <begin position="152"/>
        <end position="154"/>
    </location>
</feature>
<feature type="helix" evidence="18">
    <location>
        <begin position="155"/>
        <end position="160"/>
    </location>
</feature>
<feature type="turn" evidence="18">
    <location>
        <begin position="165"/>
        <end position="167"/>
    </location>
</feature>
<feature type="turn" evidence="18">
    <location>
        <begin position="171"/>
        <end position="173"/>
    </location>
</feature>
<feature type="strand" evidence="20">
    <location>
        <begin position="176"/>
        <end position="178"/>
    </location>
</feature>
<feature type="turn" evidence="18">
    <location>
        <begin position="182"/>
        <end position="184"/>
    </location>
</feature>
<feature type="strand" evidence="16">
    <location>
        <begin position="190"/>
        <end position="192"/>
    </location>
</feature>
<feature type="strand" evidence="16">
    <location>
        <begin position="197"/>
        <end position="199"/>
    </location>
</feature>
<feature type="helix" evidence="16">
    <location>
        <begin position="203"/>
        <end position="205"/>
    </location>
</feature>
<feature type="strand" evidence="16">
    <location>
        <begin position="210"/>
        <end position="218"/>
    </location>
</feature>
<feature type="helix" evidence="16">
    <location>
        <begin position="224"/>
        <end position="254"/>
    </location>
</feature>
<feature type="helix" evidence="16">
    <location>
        <begin position="256"/>
        <end position="259"/>
    </location>
</feature>
<feature type="turn" evidence="16">
    <location>
        <begin position="262"/>
        <end position="265"/>
    </location>
</feature>
<feature type="helix" evidence="16">
    <location>
        <begin position="266"/>
        <end position="282"/>
    </location>
</feature>
<feature type="helix" evidence="16">
    <location>
        <begin position="283"/>
        <end position="285"/>
    </location>
</feature>
<feature type="helix" evidence="16">
    <location>
        <begin position="289"/>
        <end position="294"/>
    </location>
</feature>
<feature type="strand" evidence="16">
    <location>
        <begin position="299"/>
        <end position="301"/>
    </location>
</feature>
<feature type="strand" evidence="16">
    <location>
        <begin position="304"/>
        <end position="306"/>
    </location>
</feature>
<feature type="strand" evidence="21">
    <location>
        <begin position="308"/>
        <end position="310"/>
    </location>
</feature>
<feature type="helix" evidence="16">
    <location>
        <begin position="313"/>
        <end position="347"/>
    </location>
</feature>
<feature type="turn" evidence="17">
    <location>
        <begin position="354"/>
        <end position="356"/>
    </location>
</feature>
<feature type="helix" evidence="16">
    <location>
        <begin position="361"/>
        <end position="378"/>
    </location>
</feature>
<feature type="strand" evidence="16">
    <location>
        <begin position="381"/>
        <end position="384"/>
    </location>
</feature>
<feature type="turn" evidence="16">
    <location>
        <begin position="385"/>
        <end position="388"/>
    </location>
</feature>
<feature type="strand" evidence="16">
    <location>
        <begin position="389"/>
        <end position="395"/>
    </location>
</feature>
<feature type="helix" evidence="16">
    <location>
        <begin position="397"/>
        <end position="403"/>
    </location>
</feature>
<feature type="helix" evidence="16">
    <location>
        <begin position="405"/>
        <end position="432"/>
    </location>
</feature>
<feature type="strand" evidence="16">
    <location>
        <begin position="436"/>
        <end position="442"/>
    </location>
</feature>
<feature type="helix" evidence="16">
    <location>
        <begin position="443"/>
        <end position="492"/>
    </location>
</feature>
<feature type="strand" evidence="21">
    <location>
        <begin position="496"/>
        <end position="498"/>
    </location>
</feature>
<feature type="strand" evidence="18">
    <location>
        <begin position="501"/>
        <end position="503"/>
    </location>
</feature>
<feature type="helix" evidence="16">
    <location>
        <begin position="515"/>
        <end position="532"/>
    </location>
</feature>
<feature type="helix" evidence="16">
    <location>
        <begin position="533"/>
        <end position="536"/>
    </location>
</feature>
<feature type="helix" evidence="16">
    <location>
        <begin position="539"/>
        <end position="548"/>
    </location>
</feature>
<feature type="strand" evidence="19">
    <location>
        <begin position="554"/>
        <end position="558"/>
    </location>
</feature>
<comment type="function">
    <text evidence="1 5">G protein-coupled receptor which associates with the patched protein (PTCH) to transduce hedgehog protein signaling. Binding of sonic hedgehog (SHH) to its receptor patched prevents inhibition of smoothened (SMO) by patched. When active, SMO binds to and sequesters protein kinase A catalytic subunit PRKACA at the cell membrane, preventing PRKACA-mediated phosphorylation of GLI transcription factors which releases the GLI proteins from PRKACA-mediated inhibition and allows for transcriptional activation of hedgehog pathway target genes (By similarity). Required for the accumulation of KIF7, GLI2 and GLI3 in the cilia (PubMed:19592253). Interacts with DLG5 at the ciliary base to induce the accumulation of KIF7 and GLI2 at the ciliary tip for GLI2 activation (By similarity).</text>
</comment>
<comment type="subunit">
    <text evidence="1 5 6 7 8">Homodimer (PubMed:23636324). Interacts (via C-terminus) with protein kinase A catalytic subunit PRKACA; interacts with free PRKACA subunits and the interaction leads to sequestration of PRKACA at the membrane, preventing PRKACA-mediated phosphorylation of GLI transcription factors (By similarity). Interacts with ARRB2 (By similarity). Interacts with KIF7 (PubMed:19592253). Interacts with BBS5 and BBS7; the interactions are indicative for the association of SMO with the BBsome complex to facilitate ciliary localization of SMO (PubMed:22072986). Interacts with DLG5 and SDCBP (By similarity). Interacts with GAS8/DRC4 (PubMed:21659505).</text>
</comment>
<comment type="subcellular location">
    <subcellularLocation>
        <location evidence="1">Cell membrane</location>
        <topology evidence="2">Multi-pass membrane protein</topology>
    </subcellularLocation>
    <subcellularLocation>
        <location evidence="7">Cell projection</location>
        <location evidence="7">Cilium</location>
    </subcellularLocation>
    <text evidence="1">Cilium localization is promoted by SHH and is required for activity.</text>
</comment>
<comment type="domain">
    <text evidence="1 9 11">The N-terminal extracellular domain mediates sterol-binding which is required for maximal activation of signaling (PubMed:24859340). Contains a second sterol-binding site within the seven-transmembrane pocket which is also required for activation (By similarity). The activating sterol is likely to be cholesterol (PubMed:35658032). The extracellular site is required for SHH-induced activity while the site within the transmembrane pocket regulates basal signaling in the absence of SHH (PubMed:35658032).</text>
</comment>
<comment type="PTM">
    <text evidence="1">Phosphorylation by GRK kinases is required for interaction with protein kinase A catalytic subunit PRKACA.</text>
</comment>
<comment type="disease" evidence="9 10">
    <disease id="DI-04790">
        <name>Curry-Jones syndrome</name>
        <acronym>CRJS</acronym>
        <description>A multisystem disorder characterized by patchy skin lesions, polysyndactyly, diverse cerebral malformations, unicoronal craniosynostosis, iris colobomas, microphthalmia, and intestinal malrotation with myofibromas or hamartomas.</description>
        <dbReference type="MIM" id="601707"/>
    </disease>
    <text evidence="9 10">The disease is caused by variants affecting the gene represented in this entry. 8 individuals have been identified with the disease-causing mutation Phe-412 and all were mosaic. The mutation could not be reliably detected in blood, greatest success rates were obtained with affected tissues obtained by invasive procedures. It is thought that the mutation has arisen postzygotically early during embryonic development (PubMed:27236920). This mutation has also been identified in ameloblastoma, medulloblastoma, meningioma, and basal cell carcinoma, and has been reported as the oncogenic driver in some of these tumors (PubMed:24859340).</text>
</comment>
<comment type="similarity">
    <text evidence="13">Belongs to the G-protein coupled receptor Fz/Smo family.</text>
</comment>
<organism>
    <name type="scientific">Homo sapiens</name>
    <name type="common">Human</name>
    <dbReference type="NCBI Taxonomy" id="9606"/>
    <lineage>
        <taxon>Eukaryota</taxon>
        <taxon>Metazoa</taxon>
        <taxon>Chordata</taxon>
        <taxon>Craniata</taxon>
        <taxon>Vertebrata</taxon>
        <taxon>Euteleostomi</taxon>
        <taxon>Mammalia</taxon>
        <taxon>Eutheria</taxon>
        <taxon>Euarchontoglires</taxon>
        <taxon>Primates</taxon>
        <taxon>Haplorrhini</taxon>
        <taxon>Catarrhini</taxon>
        <taxon>Hominidae</taxon>
        <taxon>Homo</taxon>
    </lineage>
</organism>
<keyword id="KW-0002">3D-structure</keyword>
<keyword id="KW-1003">Cell membrane</keyword>
<keyword id="KW-0966">Cell projection</keyword>
<keyword id="KW-0217">Developmental protein</keyword>
<keyword id="KW-0225">Disease variant</keyword>
<keyword id="KW-1015">Disulfide bond</keyword>
<keyword id="KW-0297">G-protein coupled receptor</keyword>
<keyword id="KW-0325">Glycoprotein</keyword>
<keyword id="KW-0472">Membrane</keyword>
<keyword id="KW-0597">Phosphoprotein</keyword>
<keyword id="KW-1267">Proteomics identification</keyword>
<keyword id="KW-0675">Receptor</keyword>
<keyword id="KW-1185">Reference proteome</keyword>
<keyword id="KW-0732">Signal</keyword>
<keyword id="KW-0807">Transducer</keyword>
<keyword id="KW-0812">Transmembrane</keyword>
<keyword id="KW-1133">Transmembrane helix</keyword>
<accession>Q99835</accession>
<accession>A4D1K5</accession>
<dbReference type="EMBL" id="U84401">
    <property type="protein sequence ID" value="AAB41788.1"/>
    <property type="molecule type" value="mRNA"/>
</dbReference>
<dbReference type="EMBL" id="AF114821">
    <property type="protein sequence ID" value="AAD17202.1"/>
    <property type="molecule type" value="Genomic_DNA"/>
</dbReference>
<dbReference type="EMBL" id="AF114819">
    <property type="protein sequence ID" value="AAD17202.1"/>
    <property type="status" value="JOINED"/>
    <property type="molecule type" value="Genomic_DNA"/>
</dbReference>
<dbReference type="EMBL" id="AF114820">
    <property type="protein sequence ID" value="AAD17202.1"/>
    <property type="status" value="JOINED"/>
    <property type="molecule type" value="Genomic_DNA"/>
</dbReference>
<dbReference type="EMBL" id="AF120103">
    <property type="protein sequence ID" value="AAF31757.1"/>
    <property type="molecule type" value="mRNA"/>
</dbReference>
<dbReference type="EMBL" id="AF071494">
    <property type="protein sequence ID" value="AAC24863.1"/>
    <property type="molecule type" value="mRNA"/>
</dbReference>
<dbReference type="EMBL" id="CH236950">
    <property type="protein sequence ID" value="EAL24102.1"/>
    <property type="molecule type" value="Genomic_DNA"/>
</dbReference>
<dbReference type="EMBL" id="CH471070">
    <property type="protein sequence ID" value="EAW83715.1"/>
    <property type="molecule type" value="Genomic_DNA"/>
</dbReference>
<dbReference type="EMBL" id="BC009989">
    <property type="protein sequence ID" value="AAH09989.1"/>
    <property type="molecule type" value="mRNA"/>
</dbReference>
<dbReference type="CCDS" id="CCDS5811.1"/>
<dbReference type="RefSeq" id="NP_005622.1">
    <property type="nucleotide sequence ID" value="NM_005631.5"/>
</dbReference>
<dbReference type="PDB" id="4JKV">
    <property type="method" value="X-ray"/>
    <property type="resolution" value="2.45 A"/>
    <property type="chains" value="A/B=190-555"/>
</dbReference>
<dbReference type="PDB" id="4N4W">
    <property type="method" value="X-ray"/>
    <property type="resolution" value="2.80 A"/>
    <property type="chains" value="A=190-555"/>
</dbReference>
<dbReference type="PDB" id="4O9R">
    <property type="method" value="X-ray"/>
    <property type="resolution" value="3.20 A"/>
    <property type="chains" value="A=190-433, A=441-555"/>
</dbReference>
<dbReference type="PDB" id="4QIM">
    <property type="method" value="X-ray"/>
    <property type="resolution" value="2.61 A"/>
    <property type="chains" value="A=190-433, A=441-555"/>
</dbReference>
<dbReference type="PDB" id="4QIN">
    <property type="method" value="X-ray"/>
    <property type="resolution" value="2.60 A"/>
    <property type="chains" value="A=190-433, A=441-555"/>
</dbReference>
<dbReference type="PDB" id="5L7D">
    <property type="method" value="X-ray"/>
    <property type="resolution" value="3.20 A"/>
    <property type="chains" value="A/B=32-428, A/B=443-555"/>
</dbReference>
<dbReference type="PDB" id="5L7I">
    <property type="method" value="X-ray"/>
    <property type="resolution" value="3.30 A"/>
    <property type="chains" value="A/B=32-428, A/B=443-555"/>
</dbReference>
<dbReference type="PDB" id="5V56">
    <property type="method" value="X-ray"/>
    <property type="resolution" value="2.90 A"/>
    <property type="chains" value="A/B=53-437, A/B=444-558"/>
</dbReference>
<dbReference type="PDB" id="5V57">
    <property type="method" value="X-ray"/>
    <property type="resolution" value="3.00 A"/>
    <property type="chains" value="A/B=58-437, A/B=444-558"/>
</dbReference>
<dbReference type="PDB" id="6OT0">
    <property type="method" value="EM"/>
    <property type="resolution" value="3.90 A"/>
    <property type="chains" value="R=1-555"/>
</dbReference>
<dbReference type="PDB" id="6XBJ">
    <property type="method" value="EM"/>
    <property type="resolution" value="3.88 A"/>
    <property type="chains" value="R=1-644"/>
</dbReference>
<dbReference type="PDB" id="6XBK">
    <property type="method" value="EM"/>
    <property type="resolution" value="3.24 A"/>
    <property type="chains" value="R=1-644"/>
</dbReference>
<dbReference type="PDB" id="6XBL">
    <property type="method" value="EM"/>
    <property type="resolution" value="3.90 A"/>
    <property type="chains" value="R=1-644"/>
</dbReference>
<dbReference type="PDB" id="6XBM">
    <property type="method" value="EM"/>
    <property type="resolution" value="3.15 A"/>
    <property type="chains" value="R=1-644"/>
</dbReference>
<dbReference type="PDB" id="7ZI0">
    <property type="method" value="X-ray"/>
    <property type="resolution" value="3.00 A"/>
    <property type="chains" value="A/B=32-428, A/B=443-555"/>
</dbReference>
<dbReference type="PDBsum" id="4JKV"/>
<dbReference type="PDBsum" id="4N4W"/>
<dbReference type="PDBsum" id="4O9R"/>
<dbReference type="PDBsum" id="4QIM"/>
<dbReference type="PDBsum" id="4QIN"/>
<dbReference type="PDBsum" id="5L7D"/>
<dbReference type="PDBsum" id="5L7I"/>
<dbReference type="PDBsum" id="5V56"/>
<dbReference type="PDBsum" id="5V57"/>
<dbReference type="PDBsum" id="6OT0"/>
<dbReference type="PDBsum" id="6XBJ"/>
<dbReference type="PDBsum" id="6XBK"/>
<dbReference type="PDBsum" id="6XBL"/>
<dbReference type="PDBsum" id="6XBM"/>
<dbReference type="PDBsum" id="7ZI0"/>
<dbReference type="EMDB" id="EMD-20190"/>
<dbReference type="EMDB" id="EMD-22117"/>
<dbReference type="EMDB" id="EMD-22118"/>
<dbReference type="EMDB" id="EMD-22119"/>
<dbReference type="EMDB" id="EMD-22120"/>
<dbReference type="SMR" id="Q99835"/>
<dbReference type="BioGRID" id="112492">
    <property type="interactions" value="53"/>
</dbReference>
<dbReference type="CORUM" id="Q99835"/>
<dbReference type="DIP" id="DIP-34574N"/>
<dbReference type="FunCoup" id="Q99835">
    <property type="interactions" value="581"/>
</dbReference>
<dbReference type="IntAct" id="Q99835">
    <property type="interactions" value="41"/>
</dbReference>
<dbReference type="MINT" id="Q99835"/>
<dbReference type="STRING" id="9606.ENSP00000249373"/>
<dbReference type="BindingDB" id="Q99835"/>
<dbReference type="ChEMBL" id="CHEMBL5971"/>
<dbReference type="DrugBank" id="DB16844">
    <property type="generic name" value="BMS-833923"/>
</dbReference>
<dbReference type="DrugBank" id="DB01047">
    <property type="generic name" value="Fluocinonide"/>
</dbReference>
<dbReference type="DrugBank" id="DB11978">
    <property type="generic name" value="Glasdegib"/>
</dbReference>
<dbReference type="DrugBank" id="DB06786">
    <property type="generic name" value="Halcinonide"/>
</dbReference>
<dbReference type="DrugBank" id="DB12857">
    <property type="generic name" value="NVP-LEQ-506"/>
</dbReference>
<dbReference type="DrugBank" id="DB09143">
    <property type="generic name" value="Sonidegib"/>
</dbReference>
<dbReference type="DrugBank" id="DB12550">
    <property type="generic name" value="Taladegib"/>
</dbReference>
<dbReference type="DrugBank" id="DB08828">
    <property type="generic name" value="Vismodegib"/>
</dbReference>
<dbReference type="DrugCentral" id="Q99835"/>
<dbReference type="GuidetoPHARMACOLOGY" id="239"/>
<dbReference type="TCDB" id="9.A.14.16.4">
    <property type="family name" value="the g-protein-coupled receptor (gpcr) family"/>
</dbReference>
<dbReference type="GlyConnect" id="2079">
    <property type="glycosylation" value="1 N-Linked glycan (1 site)"/>
</dbReference>
<dbReference type="GlyCosmos" id="Q99835">
    <property type="glycosylation" value="5 sites, 4 glycans"/>
</dbReference>
<dbReference type="GlyGen" id="Q99835">
    <property type="glycosylation" value="9 sites, 4 N-linked glycans (4 sites), 3 O-linked glycans (4 sites)"/>
</dbReference>
<dbReference type="iPTMnet" id="Q99835"/>
<dbReference type="PhosphoSitePlus" id="Q99835"/>
<dbReference type="BioMuta" id="SMO"/>
<dbReference type="DMDM" id="6226142"/>
<dbReference type="MassIVE" id="Q99835"/>
<dbReference type="PaxDb" id="9606-ENSP00000249373"/>
<dbReference type="PeptideAtlas" id="Q99835"/>
<dbReference type="ProteomicsDB" id="78499"/>
<dbReference type="Antibodypedia" id="31982">
    <property type="antibodies" value="600 antibodies from 37 providers"/>
</dbReference>
<dbReference type="DNASU" id="6608"/>
<dbReference type="Ensembl" id="ENST00000249373.8">
    <property type="protein sequence ID" value="ENSP00000249373.3"/>
    <property type="gene ID" value="ENSG00000128602.11"/>
</dbReference>
<dbReference type="GeneID" id="6608"/>
<dbReference type="KEGG" id="hsa:6608"/>
<dbReference type="MANE-Select" id="ENST00000249373.8">
    <property type="protein sequence ID" value="ENSP00000249373.3"/>
    <property type="RefSeq nucleotide sequence ID" value="NM_005631.5"/>
    <property type="RefSeq protein sequence ID" value="NP_005622.1"/>
</dbReference>
<dbReference type="UCSC" id="uc003vor.4">
    <property type="organism name" value="human"/>
</dbReference>
<dbReference type="AGR" id="HGNC:11119"/>
<dbReference type="CTD" id="6608"/>
<dbReference type="DisGeNET" id="6608"/>
<dbReference type="GeneCards" id="SMO"/>
<dbReference type="GeneReviews" id="SMO"/>
<dbReference type="HGNC" id="HGNC:11119">
    <property type="gene designation" value="SMO"/>
</dbReference>
<dbReference type="HPA" id="ENSG00000128602">
    <property type="expression patterns" value="Low tissue specificity"/>
</dbReference>
<dbReference type="MalaCards" id="SMO"/>
<dbReference type="MIM" id="601500">
    <property type="type" value="gene"/>
</dbReference>
<dbReference type="MIM" id="601707">
    <property type="type" value="phenotype"/>
</dbReference>
<dbReference type="neXtProt" id="NX_Q99835"/>
<dbReference type="OpenTargets" id="ENSG00000128602"/>
<dbReference type="Orphanet" id="1553">
    <property type="disease" value="Curry-Jones syndrome"/>
</dbReference>
<dbReference type="Orphanet" id="388">
    <property type="disease" value="Hirschsprung disease"/>
</dbReference>
<dbReference type="Orphanet" id="2495">
    <property type="disease" value="Meningioma"/>
</dbReference>
<dbReference type="PharmGKB" id="PA35968"/>
<dbReference type="VEuPathDB" id="HostDB:ENSG00000128602"/>
<dbReference type="eggNOG" id="KOG3577">
    <property type="taxonomic scope" value="Eukaryota"/>
</dbReference>
<dbReference type="GeneTree" id="ENSGT00940000157206"/>
<dbReference type="HOGENOM" id="CLU_007873_3_1_1"/>
<dbReference type="InParanoid" id="Q99835"/>
<dbReference type="OMA" id="HCEPLRY"/>
<dbReference type="OrthoDB" id="10064659at2759"/>
<dbReference type="PAN-GO" id="Q99835">
    <property type="GO annotations" value="9 GO annotations based on evolutionary models"/>
</dbReference>
<dbReference type="PhylomeDB" id="Q99835"/>
<dbReference type="TreeFam" id="TF106460"/>
<dbReference type="PathwayCommons" id="Q99835"/>
<dbReference type="Reactome" id="R-HSA-373080">
    <property type="pathway name" value="Class B/2 (Secretin family receptors)"/>
</dbReference>
<dbReference type="Reactome" id="R-HSA-5610787">
    <property type="pathway name" value="Hedgehog 'off' state"/>
</dbReference>
<dbReference type="Reactome" id="R-HSA-5620922">
    <property type="pathway name" value="BBSome-mediated cargo-targeting to cilium"/>
</dbReference>
<dbReference type="Reactome" id="R-HSA-5632684">
    <property type="pathway name" value="Hedgehog 'on' state"/>
</dbReference>
<dbReference type="Reactome" id="R-HSA-5635838">
    <property type="pathway name" value="Activation of SMO"/>
</dbReference>
<dbReference type="SignaLink" id="Q99835"/>
<dbReference type="SIGNOR" id="Q99835"/>
<dbReference type="BioGRID-ORCS" id="6608">
    <property type="hits" value="15 hits in 1154 CRISPR screens"/>
</dbReference>
<dbReference type="ChiTaRS" id="SMO">
    <property type="organism name" value="human"/>
</dbReference>
<dbReference type="EvolutionaryTrace" id="Q99835"/>
<dbReference type="GeneWiki" id="Smoothened"/>
<dbReference type="GenomeRNAi" id="6608"/>
<dbReference type="Pharos" id="Q99835">
    <property type="development level" value="Tclin"/>
</dbReference>
<dbReference type="PRO" id="PR:Q99835"/>
<dbReference type="Proteomes" id="UP000005640">
    <property type="component" value="Chromosome 7"/>
</dbReference>
<dbReference type="RNAct" id="Q99835">
    <property type="molecule type" value="protein"/>
</dbReference>
<dbReference type="Bgee" id="ENSG00000128602">
    <property type="expression patterns" value="Expressed in ventricular zone and 143 other cell types or tissues"/>
</dbReference>
<dbReference type="ExpressionAtlas" id="Q99835">
    <property type="expression patterns" value="baseline and differential"/>
</dbReference>
<dbReference type="GO" id="GO:0097731">
    <property type="term" value="C:9+0 non-motile cilium"/>
    <property type="evidence" value="ECO:0007669"/>
    <property type="project" value="Ensembl"/>
</dbReference>
<dbReference type="GO" id="GO:0005814">
    <property type="term" value="C:centriole"/>
    <property type="evidence" value="ECO:0007669"/>
    <property type="project" value="Ensembl"/>
</dbReference>
<dbReference type="GO" id="GO:0060170">
    <property type="term" value="C:ciliary membrane"/>
    <property type="evidence" value="ECO:0000304"/>
    <property type="project" value="Reactome"/>
</dbReference>
<dbReference type="GO" id="GO:0097542">
    <property type="term" value="C:ciliary tip"/>
    <property type="evidence" value="ECO:0000304"/>
    <property type="project" value="Reactome"/>
</dbReference>
<dbReference type="GO" id="GO:0005929">
    <property type="term" value="C:cilium"/>
    <property type="evidence" value="ECO:0000314"/>
    <property type="project" value="UniProtKB"/>
</dbReference>
<dbReference type="GO" id="GO:0030425">
    <property type="term" value="C:dendrite"/>
    <property type="evidence" value="ECO:0000318"/>
    <property type="project" value="GO_Central"/>
</dbReference>
<dbReference type="GO" id="GO:0030666">
    <property type="term" value="C:endocytic vesicle membrane"/>
    <property type="evidence" value="ECO:0000304"/>
    <property type="project" value="Reactome"/>
</dbReference>
<dbReference type="GO" id="GO:0005783">
    <property type="term" value="C:endoplasmic reticulum"/>
    <property type="evidence" value="ECO:0007669"/>
    <property type="project" value="Ensembl"/>
</dbReference>
<dbReference type="GO" id="GO:0005793">
    <property type="term" value="C:endoplasmic reticulum-Golgi intermediate compartment"/>
    <property type="evidence" value="ECO:0007669"/>
    <property type="project" value="Ensembl"/>
</dbReference>
<dbReference type="GO" id="GO:0070062">
    <property type="term" value="C:extracellular exosome"/>
    <property type="evidence" value="ECO:0007005"/>
    <property type="project" value="UniProtKB"/>
</dbReference>
<dbReference type="GO" id="GO:0005794">
    <property type="term" value="C:Golgi apparatus"/>
    <property type="evidence" value="ECO:0007669"/>
    <property type="project" value="Ensembl"/>
</dbReference>
<dbReference type="GO" id="GO:0043231">
    <property type="term" value="C:intracellular membrane-bounded organelle"/>
    <property type="evidence" value="ECO:0000314"/>
    <property type="project" value="BHF-UCL"/>
</dbReference>
<dbReference type="GO" id="GO:0005770">
    <property type="term" value="C:late endosome"/>
    <property type="evidence" value="ECO:0007669"/>
    <property type="project" value="Ensembl"/>
</dbReference>
<dbReference type="GO" id="GO:0005886">
    <property type="term" value="C:plasma membrane"/>
    <property type="evidence" value="ECO:0000314"/>
    <property type="project" value="UniProtKB"/>
</dbReference>
<dbReference type="GO" id="GO:0004862">
    <property type="term" value="F:cAMP-dependent protein kinase inhibitor activity"/>
    <property type="evidence" value="ECO:0000314"/>
    <property type="project" value="FlyBase"/>
</dbReference>
<dbReference type="GO" id="GO:0004930">
    <property type="term" value="F:G protein-coupled receptor activity"/>
    <property type="evidence" value="ECO:0007669"/>
    <property type="project" value="UniProtKB-KW"/>
</dbReference>
<dbReference type="GO" id="GO:0008142">
    <property type="term" value="F:oxysterol binding"/>
    <property type="evidence" value="ECO:0000250"/>
    <property type="project" value="UniProtKB"/>
</dbReference>
<dbReference type="GO" id="GO:0005113">
    <property type="term" value="F:patched binding"/>
    <property type="evidence" value="ECO:0000353"/>
    <property type="project" value="BHF-UCL"/>
</dbReference>
<dbReference type="GO" id="GO:0034236">
    <property type="term" value="F:protein kinase A catalytic subunit binding"/>
    <property type="evidence" value="ECO:0000250"/>
    <property type="project" value="UniProtKB"/>
</dbReference>
<dbReference type="GO" id="GO:0140311">
    <property type="term" value="F:protein sequestering activity"/>
    <property type="evidence" value="ECO:0000250"/>
    <property type="project" value="UniProtKB"/>
</dbReference>
<dbReference type="GO" id="GO:0009952">
    <property type="term" value="P:anterior/posterior pattern specification"/>
    <property type="evidence" value="ECO:0007669"/>
    <property type="project" value="Ensembl"/>
</dbReference>
<dbReference type="GO" id="GO:0006915">
    <property type="term" value="P:apoptotic process"/>
    <property type="evidence" value="ECO:0007669"/>
    <property type="project" value="Ensembl"/>
</dbReference>
<dbReference type="GO" id="GO:0048143">
    <property type="term" value="P:astrocyte activation"/>
    <property type="evidence" value="ECO:0007669"/>
    <property type="project" value="Ensembl"/>
</dbReference>
<dbReference type="GO" id="GO:0060413">
    <property type="term" value="P:atrial septum morphogenesis"/>
    <property type="evidence" value="ECO:0007669"/>
    <property type="project" value="Ensembl"/>
</dbReference>
<dbReference type="GO" id="GO:0001708">
    <property type="term" value="P:cell fate specification"/>
    <property type="evidence" value="ECO:0007669"/>
    <property type="project" value="Ensembl"/>
</dbReference>
<dbReference type="GO" id="GO:0071397">
    <property type="term" value="P:cellular response to cholesterol"/>
    <property type="evidence" value="ECO:0000250"/>
    <property type="project" value="BHF-UCL"/>
</dbReference>
<dbReference type="GO" id="GO:0007417">
    <property type="term" value="P:central nervous system development"/>
    <property type="evidence" value="ECO:0000318"/>
    <property type="project" value="GO_Central"/>
</dbReference>
<dbReference type="GO" id="GO:0021953">
    <property type="term" value="P:central nervous system neuron differentiation"/>
    <property type="evidence" value="ECO:0007669"/>
    <property type="project" value="Ensembl"/>
</dbReference>
<dbReference type="GO" id="GO:0021696">
    <property type="term" value="P:cerebellar cortex morphogenesis"/>
    <property type="evidence" value="ECO:0007669"/>
    <property type="project" value="Ensembl"/>
</dbReference>
<dbReference type="GO" id="GO:0021987">
    <property type="term" value="P:cerebral cortex development"/>
    <property type="evidence" value="ECO:0007669"/>
    <property type="project" value="Ensembl"/>
</dbReference>
<dbReference type="GO" id="GO:0071679">
    <property type="term" value="P:commissural neuron axon guidance"/>
    <property type="evidence" value="ECO:0000318"/>
    <property type="project" value="GO_Central"/>
</dbReference>
<dbReference type="GO" id="GO:0060242">
    <property type="term" value="P:contact inhibition"/>
    <property type="evidence" value="ECO:0000315"/>
    <property type="project" value="BHF-UCL"/>
</dbReference>
<dbReference type="GO" id="GO:0021542">
    <property type="term" value="P:dentate gyrus development"/>
    <property type="evidence" value="ECO:0007669"/>
    <property type="project" value="Ensembl"/>
</dbReference>
<dbReference type="GO" id="GO:0003140">
    <property type="term" value="P:determination of left/right asymmetry in lateral mesoderm"/>
    <property type="evidence" value="ECO:0000250"/>
    <property type="project" value="BHF-UCL"/>
</dbReference>
<dbReference type="GO" id="GO:0071542">
    <property type="term" value="P:dopaminergic neuron differentiation"/>
    <property type="evidence" value="ECO:0007669"/>
    <property type="project" value="Ensembl"/>
</dbReference>
<dbReference type="GO" id="GO:0021904">
    <property type="term" value="P:dorsal/ventral neural tube patterning"/>
    <property type="evidence" value="ECO:0007669"/>
    <property type="project" value="Ensembl"/>
</dbReference>
<dbReference type="GO" id="GO:0050673">
    <property type="term" value="P:epithelial cell proliferation"/>
    <property type="evidence" value="ECO:0007669"/>
    <property type="project" value="Ensembl"/>
</dbReference>
<dbReference type="GO" id="GO:0060684">
    <property type="term" value="P:epithelial-mesenchymal cell signaling"/>
    <property type="evidence" value="ECO:0007669"/>
    <property type="project" value="Ensembl"/>
</dbReference>
<dbReference type="GO" id="GO:0048853">
    <property type="term" value="P:forebrain morphogenesis"/>
    <property type="evidence" value="ECO:0000250"/>
    <property type="project" value="BHF-UCL"/>
</dbReference>
<dbReference type="GO" id="GO:0010467">
    <property type="term" value="P:gene expression"/>
    <property type="evidence" value="ECO:0007669"/>
    <property type="project" value="Ensembl"/>
</dbReference>
<dbReference type="GO" id="GO:0031069">
    <property type="term" value="P:hair follicle morphogenesis"/>
    <property type="evidence" value="ECO:0007669"/>
    <property type="project" value="Ensembl"/>
</dbReference>
<dbReference type="GO" id="GO:0001947">
    <property type="term" value="P:heart looping"/>
    <property type="evidence" value="ECO:0000250"/>
    <property type="project" value="BHF-UCL"/>
</dbReference>
<dbReference type="GO" id="GO:0048873">
    <property type="term" value="P:homeostasis of number of cells within a tissue"/>
    <property type="evidence" value="ECO:0007669"/>
    <property type="project" value="Ensembl"/>
</dbReference>
<dbReference type="GO" id="GO:0001701">
    <property type="term" value="P:in utero embryonic development"/>
    <property type="evidence" value="ECO:0007669"/>
    <property type="project" value="Ensembl"/>
</dbReference>
<dbReference type="GO" id="GO:0070986">
    <property type="term" value="P:left/right axis specification"/>
    <property type="evidence" value="ECO:0007669"/>
    <property type="project" value="Ensembl"/>
</dbReference>
<dbReference type="GO" id="GO:0060644">
    <property type="term" value="P:mammary gland epithelial cell differentiation"/>
    <property type="evidence" value="ECO:0007669"/>
    <property type="project" value="Ensembl"/>
</dbReference>
<dbReference type="GO" id="GO:0072285">
    <property type="term" value="P:mesenchymal to epithelial transition involved in metanephric renal vesicle formation"/>
    <property type="evidence" value="ECO:0000250"/>
    <property type="project" value="UniProtKB"/>
</dbReference>
<dbReference type="GO" id="GO:0007494">
    <property type="term" value="P:midgut development"/>
    <property type="evidence" value="ECO:0000250"/>
    <property type="project" value="BHF-UCL"/>
</dbReference>
<dbReference type="GO" id="GO:0035264">
    <property type="term" value="P:multicellular organism growth"/>
    <property type="evidence" value="ECO:0007669"/>
    <property type="project" value="Ensembl"/>
</dbReference>
<dbReference type="GO" id="GO:0051451">
    <property type="term" value="P:myoblast migration"/>
    <property type="evidence" value="ECO:0007669"/>
    <property type="project" value="Ensembl"/>
</dbReference>
<dbReference type="GO" id="GO:0043066">
    <property type="term" value="P:negative regulation of apoptotic process"/>
    <property type="evidence" value="ECO:0007669"/>
    <property type="project" value="Ensembl"/>
</dbReference>
<dbReference type="GO" id="GO:0043392">
    <property type="term" value="P:negative regulation of DNA binding"/>
    <property type="evidence" value="ECO:0000250"/>
    <property type="project" value="UniProtKB"/>
</dbReference>
<dbReference type="GO" id="GO:0030857">
    <property type="term" value="P:negative regulation of epithelial cell differentiation"/>
    <property type="evidence" value="ECO:0007669"/>
    <property type="project" value="Ensembl"/>
</dbReference>
<dbReference type="GO" id="GO:0010629">
    <property type="term" value="P:negative regulation of gene expression"/>
    <property type="evidence" value="ECO:0000250"/>
    <property type="project" value="UniProtKB"/>
</dbReference>
<dbReference type="GO" id="GO:0051799">
    <property type="term" value="P:negative regulation of hair follicle development"/>
    <property type="evidence" value="ECO:0007669"/>
    <property type="project" value="Ensembl"/>
</dbReference>
<dbReference type="GO" id="GO:0001933">
    <property type="term" value="P:negative regulation of protein phosphorylation"/>
    <property type="evidence" value="ECO:0000250"/>
    <property type="project" value="UniProtKB"/>
</dbReference>
<dbReference type="GO" id="GO:0000122">
    <property type="term" value="P:negative regulation of transcription by RNA polymerase II"/>
    <property type="evidence" value="ECO:0007669"/>
    <property type="project" value="Ensembl"/>
</dbReference>
<dbReference type="GO" id="GO:0001755">
    <property type="term" value="P:neural crest cell migration"/>
    <property type="evidence" value="ECO:0007669"/>
    <property type="project" value="Ensembl"/>
</dbReference>
<dbReference type="GO" id="GO:0007405">
    <property type="term" value="P:neuroblast proliferation"/>
    <property type="evidence" value="ECO:0007669"/>
    <property type="project" value="Ensembl"/>
</dbReference>
<dbReference type="GO" id="GO:0042475">
    <property type="term" value="P:odontogenesis of dentin-containing tooth"/>
    <property type="evidence" value="ECO:0007669"/>
    <property type="project" value="Ensembl"/>
</dbReference>
<dbReference type="GO" id="GO:0001649">
    <property type="term" value="P:osteoblast differentiation"/>
    <property type="evidence" value="ECO:0007669"/>
    <property type="project" value="Ensembl"/>
</dbReference>
<dbReference type="GO" id="GO:0061113">
    <property type="term" value="P:pancreas morphogenesis"/>
    <property type="evidence" value="ECO:0007669"/>
    <property type="project" value="Ensembl"/>
</dbReference>
<dbReference type="GO" id="GO:0007389">
    <property type="term" value="P:pattern specification process"/>
    <property type="evidence" value="ECO:0000318"/>
    <property type="project" value="GO_Central"/>
</dbReference>
<dbReference type="GO" id="GO:0090190">
    <property type="term" value="P:positive regulation of branching involved in ureteric bud morphogenesis"/>
    <property type="evidence" value="ECO:0000250"/>
    <property type="project" value="UniProtKB"/>
</dbReference>
<dbReference type="GO" id="GO:0030335">
    <property type="term" value="P:positive regulation of cell migration"/>
    <property type="evidence" value="ECO:0000315"/>
    <property type="project" value="ARUK-UCL"/>
</dbReference>
<dbReference type="GO" id="GO:0050679">
    <property type="term" value="P:positive regulation of epithelial cell proliferation"/>
    <property type="evidence" value="ECO:0007669"/>
    <property type="project" value="Ensembl"/>
</dbReference>
<dbReference type="GO" id="GO:0010628">
    <property type="term" value="P:positive regulation of gene expression"/>
    <property type="evidence" value="ECO:0000315"/>
    <property type="project" value="ARUK-UCL"/>
</dbReference>
<dbReference type="GO" id="GO:0002053">
    <property type="term" value="P:positive regulation of mesenchymal cell proliferation"/>
    <property type="evidence" value="ECO:0007669"/>
    <property type="project" value="Ensembl"/>
</dbReference>
<dbReference type="GO" id="GO:0040018">
    <property type="term" value="P:positive regulation of multicellular organism growth"/>
    <property type="evidence" value="ECO:0007669"/>
    <property type="project" value="Ensembl"/>
</dbReference>
<dbReference type="GO" id="GO:0002052">
    <property type="term" value="P:positive regulation of neuroblast proliferation"/>
    <property type="evidence" value="ECO:0007669"/>
    <property type="project" value="Ensembl"/>
</dbReference>
<dbReference type="GO" id="GO:0046622">
    <property type="term" value="P:positive regulation of organ growth"/>
    <property type="evidence" value="ECO:0007669"/>
    <property type="project" value="Ensembl"/>
</dbReference>
<dbReference type="GO" id="GO:0042307">
    <property type="term" value="P:positive regulation of protein import into nucleus"/>
    <property type="evidence" value="ECO:0007669"/>
    <property type="project" value="Ensembl"/>
</dbReference>
<dbReference type="GO" id="GO:0045880">
    <property type="term" value="P:positive regulation of smoothened signaling pathway"/>
    <property type="evidence" value="ECO:0007669"/>
    <property type="project" value="Ensembl"/>
</dbReference>
<dbReference type="GO" id="GO:0045944">
    <property type="term" value="P:positive regulation of transcription by RNA polymerase II"/>
    <property type="evidence" value="ECO:0000250"/>
    <property type="project" value="BHF-UCL"/>
</dbReference>
<dbReference type="GO" id="GO:0006606">
    <property type="term" value="P:protein import into nucleus"/>
    <property type="evidence" value="ECO:0007669"/>
    <property type="project" value="Ensembl"/>
</dbReference>
<dbReference type="GO" id="GO:0050821">
    <property type="term" value="P:protein stabilization"/>
    <property type="evidence" value="ECO:0007669"/>
    <property type="project" value="Ensembl"/>
</dbReference>
<dbReference type="GO" id="GO:2000826">
    <property type="term" value="P:regulation of heart morphogenesis"/>
    <property type="evidence" value="ECO:0000250"/>
    <property type="project" value="BHF-UCL"/>
</dbReference>
<dbReference type="GO" id="GO:1904672">
    <property type="term" value="P:regulation of somatic stem cell population maintenance"/>
    <property type="evidence" value="ECO:0007669"/>
    <property type="project" value="Ensembl"/>
</dbReference>
<dbReference type="GO" id="GO:1902140">
    <property type="term" value="P:response to inositol"/>
    <property type="evidence" value="ECO:0007669"/>
    <property type="project" value="Ensembl"/>
</dbReference>
<dbReference type="GO" id="GO:0048741">
    <property type="term" value="P:skeletal muscle fiber development"/>
    <property type="evidence" value="ECO:0007669"/>
    <property type="project" value="Ensembl"/>
</dbReference>
<dbReference type="GO" id="GO:0048745">
    <property type="term" value="P:smooth muscle tissue development"/>
    <property type="evidence" value="ECO:0000270"/>
    <property type="project" value="UniProtKB"/>
</dbReference>
<dbReference type="GO" id="GO:0007224">
    <property type="term" value="P:smoothened signaling pathway"/>
    <property type="evidence" value="ECO:0000314"/>
    <property type="project" value="FlyBase"/>
</dbReference>
<dbReference type="GO" id="GO:0061053">
    <property type="term" value="P:somite development"/>
    <property type="evidence" value="ECO:0000250"/>
    <property type="project" value="BHF-UCL"/>
</dbReference>
<dbReference type="GO" id="GO:0021513">
    <property type="term" value="P:spinal cord dorsal/ventral patterning"/>
    <property type="evidence" value="ECO:0007669"/>
    <property type="project" value="Ensembl"/>
</dbReference>
<dbReference type="GO" id="GO:0021794">
    <property type="term" value="P:thalamus development"/>
    <property type="evidence" value="ECO:0007669"/>
    <property type="project" value="Ensembl"/>
</dbReference>
<dbReference type="GO" id="GO:0003323">
    <property type="term" value="P:type B pancreatic cell development"/>
    <property type="evidence" value="ECO:0007669"/>
    <property type="project" value="Ensembl"/>
</dbReference>
<dbReference type="GO" id="GO:0001570">
    <property type="term" value="P:vasculogenesis"/>
    <property type="evidence" value="ECO:0007669"/>
    <property type="project" value="Ensembl"/>
</dbReference>
<dbReference type="GO" id="GO:0007371">
    <property type="term" value="P:ventral midline determination"/>
    <property type="evidence" value="ECO:0000250"/>
    <property type="project" value="BHF-UCL"/>
</dbReference>
<dbReference type="CDD" id="cd15030">
    <property type="entry name" value="7tmF_SMO_homolog"/>
    <property type="match status" value="1"/>
</dbReference>
<dbReference type="CDD" id="cd07451">
    <property type="entry name" value="CRD_SMO"/>
    <property type="match status" value="1"/>
</dbReference>
<dbReference type="FunFam" id="1.10.2000.10:FF:000010">
    <property type="entry name" value="Smoothened, frizzled class receptor"/>
    <property type="match status" value="1"/>
</dbReference>
<dbReference type="FunFam" id="1.20.1070.10:FF:000068">
    <property type="entry name" value="Smoothened, frizzled class receptor"/>
    <property type="match status" value="1"/>
</dbReference>
<dbReference type="Gene3D" id="1.10.2000.10">
    <property type="entry name" value="Frizzled cysteine-rich domain"/>
    <property type="match status" value="1"/>
</dbReference>
<dbReference type="Gene3D" id="1.20.1070.10">
    <property type="entry name" value="Rhodopsin 7-helix transmembrane proteins"/>
    <property type="match status" value="1"/>
</dbReference>
<dbReference type="InterPro" id="IPR015526">
    <property type="entry name" value="Frizzled/SFRP"/>
</dbReference>
<dbReference type="InterPro" id="IPR000539">
    <property type="entry name" value="Frizzled/Smoothened_7TM"/>
</dbReference>
<dbReference type="InterPro" id="IPR020067">
    <property type="entry name" value="Frizzled_dom"/>
</dbReference>
<dbReference type="InterPro" id="IPR036790">
    <property type="entry name" value="Frizzled_dom_sf"/>
</dbReference>
<dbReference type="InterPro" id="IPR017981">
    <property type="entry name" value="GPCR_2-like_7TM"/>
</dbReference>
<dbReference type="InterPro" id="IPR035683">
    <property type="entry name" value="SMO_7TM"/>
</dbReference>
<dbReference type="InterPro" id="IPR041771">
    <property type="entry name" value="SMO_CRD"/>
</dbReference>
<dbReference type="PANTHER" id="PTHR11309">
    <property type="entry name" value="FRIZZLED"/>
    <property type="match status" value="1"/>
</dbReference>
<dbReference type="PANTHER" id="PTHR11309:SF35">
    <property type="entry name" value="PROTEIN SMOOTHENED"/>
    <property type="match status" value="1"/>
</dbReference>
<dbReference type="Pfam" id="PF01534">
    <property type="entry name" value="Frizzled"/>
    <property type="match status" value="1"/>
</dbReference>
<dbReference type="Pfam" id="PF01392">
    <property type="entry name" value="Fz"/>
    <property type="match status" value="1"/>
</dbReference>
<dbReference type="PRINTS" id="PR00489">
    <property type="entry name" value="FRIZZLED"/>
</dbReference>
<dbReference type="SMART" id="SM00063">
    <property type="entry name" value="FRI"/>
    <property type="match status" value="1"/>
</dbReference>
<dbReference type="SMART" id="SM01330">
    <property type="entry name" value="Frizzled"/>
    <property type="match status" value="1"/>
</dbReference>
<dbReference type="SUPFAM" id="SSF63501">
    <property type="entry name" value="Frizzled cysteine-rich domain"/>
    <property type="match status" value="1"/>
</dbReference>
<dbReference type="PROSITE" id="PS50038">
    <property type="entry name" value="FZ"/>
    <property type="match status" value="1"/>
</dbReference>
<dbReference type="PROSITE" id="PS50261">
    <property type="entry name" value="G_PROTEIN_RECEP_F2_4"/>
    <property type="match status" value="1"/>
</dbReference>